<organism>
    <name type="scientific">Arabidopsis thaliana</name>
    <name type="common">Mouse-ear cress</name>
    <dbReference type="NCBI Taxonomy" id="3702"/>
    <lineage>
        <taxon>Eukaryota</taxon>
        <taxon>Viridiplantae</taxon>
        <taxon>Streptophyta</taxon>
        <taxon>Embryophyta</taxon>
        <taxon>Tracheophyta</taxon>
        <taxon>Spermatophyta</taxon>
        <taxon>Magnoliopsida</taxon>
        <taxon>eudicotyledons</taxon>
        <taxon>Gunneridae</taxon>
        <taxon>Pentapetalae</taxon>
        <taxon>rosids</taxon>
        <taxon>malvids</taxon>
        <taxon>Brassicales</taxon>
        <taxon>Brassicaceae</taxon>
        <taxon>Camelineae</taxon>
        <taxon>Arabidopsis</taxon>
    </lineage>
</organism>
<accession>F4I7Y2</accession>
<accession>Q683B5</accession>
<accession>Q9C6I3</accession>
<evidence type="ECO:0000250" key="1"/>
<evidence type="ECO:0000255" key="2"/>
<evidence type="ECO:0000303" key="3">
    <source ref="3"/>
</evidence>
<evidence type="ECO:0000305" key="4"/>
<comment type="function">
    <text evidence="1">Involved in retrograde transport from early and late endosomes to late Golgi, leading to the membrane fusion between late Golgi and endosomal vesicles.</text>
</comment>
<comment type="subunit">
    <text evidence="1">Component of the Golgi-associated retrograde protein (GARP) complex.</text>
</comment>
<comment type="subcellular location">
    <subcellularLocation>
        <location>Cytoplasm</location>
    </subcellularLocation>
    <subcellularLocation>
        <location evidence="1">Golgi apparatus</location>
        <location evidence="1">trans-Golgi network membrane</location>
        <topology evidence="1">Peripheral membrane protein</topology>
    </subcellularLocation>
    <subcellularLocation>
        <location evidence="1">Endosome membrane</location>
        <topology evidence="1">Peripheral membrane protein</topology>
    </subcellularLocation>
</comment>
<comment type="alternative products">
    <event type="alternative splicing"/>
    <isoform>
        <id>F4I7Y2-1</id>
        <name>1</name>
        <sequence type="displayed"/>
    </isoform>
    <isoform>
        <id>F4I7Y2-2</id>
        <name>2</name>
        <sequence type="described" ref="VSP_053515 VSP_053516"/>
    </isoform>
</comment>
<comment type="similarity">
    <text evidence="4">Belongs to the VPS53 family.</text>
</comment>
<comment type="sequence caution" evidence="4">
    <conflict type="erroneous gene model prediction">
        <sequence resource="EMBL-CDS" id="AAG50948"/>
    </conflict>
</comment>
<protein>
    <recommendedName>
        <fullName>Vacuolar protein sorting-associated protein 53 B</fullName>
    </recommendedName>
</protein>
<gene>
    <name type="ordered locus">At1g50970</name>
    <name type="ORF">F8A12.19</name>
</gene>
<feature type="chain" id="PRO_0000424846" description="Vacuolar protein sorting-associated protein 53 B">
    <location>
        <begin position="1"/>
        <end position="569"/>
    </location>
</feature>
<feature type="coiled-coil region" evidence="2">
    <location>
        <begin position="53"/>
        <end position="90"/>
    </location>
</feature>
<feature type="coiled-coil region" evidence="2">
    <location>
        <begin position="125"/>
        <end position="145"/>
    </location>
</feature>
<feature type="coiled-coil region" evidence="2">
    <location>
        <begin position="295"/>
        <end position="316"/>
    </location>
</feature>
<feature type="splice variant" id="VSP_053515" description="In isoform 2." evidence="3">
    <original>AINELCNHFKAYMDLPK</original>
    <variation>LRYWDRDRGIVFAKEVI</variation>
    <location>
        <begin position="142"/>
        <end position="158"/>
    </location>
</feature>
<feature type="splice variant" id="VSP_053516" description="In isoform 2." evidence="3">
    <location>
        <begin position="159"/>
        <end position="569"/>
    </location>
</feature>
<name>VP53B_ARATH</name>
<keyword id="KW-0025">Alternative splicing</keyword>
<keyword id="KW-0175">Coiled coil</keyword>
<keyword id="KW-0963">Cytoplasm</keyword>
<keyword id="KW-0967">Endosome</keyword>
<keyword id="KW-0333">Golgi apparatus</keyword>
<keyword id="KW-0472">Membrane</keyword>
<keyword id="KW-0653">Protein transport</keyword>
<keyword id="KW-1185">Reference proteome</keyword>
<keyword id="KW-0813">Transport</keyword>
<sequence>MDKSSGLDFINQMFPVEASLSCVESFMQKICDEIRRVDATILAVVSQQGNSGTRAKENLNDAICAAEELSHKIQEIKSKAEQTEAMVQDICSDIKKLDFAKKNITTAVTALSRLTMLVSAVQQLQVMTSKRQYKEAATQLEAINELCNHFKAYMDLPKIMELREKLKNIKQILKFHVFSDFSSLGTGTETEELFLLKKLSDSCLVVDALEPSVREELINNFCSRELTSYEQIYVGAELKTLDEIELIYNQLSCLIRKNQGKWTIFPASWHVPYRLCIQLSRKTRVQVESILVNLKEKSDVEKLLLELKRTLEFERELEMKFGGGGSIGDDIIGGGGNNSQKFNFRGMISSCFEPHLTIYIEKEEMELMQLLEKVVQEETWDIEEELGCHSENSVYLMLLDAHDMKMILLKVPSLARQPEASALLVKTATASYVKLVNHQMKRAEAVLKVIASPIVTVIDTYRALFPEETPMEFQRILVLKGLTKAEQQSILDDFNNHSSRITQLSVAAKTPEAHALPLALTNVAPAVRFKANSEEVLTRAASAATTSFMKLYALTGAAKDRPFRKLFNP</sequence>
<dbReference type="EMBL" id="AC079284">
    <property type="protein sequence ID" value="AAG50948.1"/>
    <property type="status" value="ALT_SEQ"/>
    <property type="molecule type" value="Genomic_DNA"/>
</dbReference>
<dbReference type="EMBL" id="CP002684">
    <property type="protein sequence ID" value="AEE32607.1"/>
    <property type="molecule type" value="Genomic_DNA"/>
</dbReference>
<dbReference type="EMBL" id="AK175202">
    <property type="protein sequence ID" value="BAD42965.1"/>
    <property type="molecule type" value="mRNA"/>
</dbReference>
<dbReference type="PIR" id="H96546">
    <property type="entry name" value="H96546"/>
</dbReference>
<dbReference type="RefSeq" id="NP_175510.2">
    <molecule id="F4I7Y2-1"/>
    <property type="nucleotide sequence ID" value="NM_103977.2"/>
</dbReference>
<dbReference type="SMR" id="F4I7Y2"/>
<dbReference type="BioGRID" id="26744">
    <property type="interactions" value="2"/>
</dbReference>
<dbReference type="FunCoup" id="F4I7Y2">
    <property type="interactions" value="3972"/>
</dbReference>
<dbReference type="STRING" id="3702.F4I7Y2"/>
<dbReference type="PaxDb" id="3702-AT1G50970.1"/>
<dbReference type="EnsemblPlants" id="AT1G50970.1">
    <molecule id="F4I7Y2-1"/>
    <property type="protein sequence ID" value="AT1G50970.1"/>
    <property type="gene ID" value="AT1G50970"/>
</dbReference>
<dbReference type="GeneID" id="841519"/>
<dbReference type="Gramene" id="AT1G50970.1">
    <molecule id="F4I7Y2-1"/>
    <property type="protein sequence ID" value="AT1G50970.1"/>
    <property type="gene ID" value="AT1G50970"/>
</dbReference>
<dbReference type="KEGG" id="ath:AT1G50970"/>
<dbReference type="Araport" id="AT1G50970"/>
<dbReference type="TAIR" id="AT1G50970"/>
<dbReference type="eggNOG" id="KOG2180">
    <property type="taxonomic scope" value="Eukaryota"/>
</dbReference>
<dbReference type="HOGENOM" id="CLU_479281_0_0_1"/>
<dbReference type="InParanoid" id="F4I7Y2"/>
<dbReference type="OMA" id="SRRVYLM"/>
<dbReference type="PRO" id="PR:F4I7Y2"/>
<dbReference type="Proteomes" id="UP000006548">
    <property type="component" value="Chromosome 1"/>
</dbReference>
<dbReference type="ExpressionAtlas" id="F4I7Y2">
    <property type="expression patterns" value="baseline and differential"/>
</dbReference>
<dbReference type="GO" id="GO:0005829">
    <property type="term" value="C:cytosol"/>
    <property type="evidence" value="ECO:0007669"/>
    <property type="project" value="GOC"/>
</dbReference>
<dbReference type="GO" id="GO:0010008">
    <property type="term" value="C:endosome membrane"/>
    <property type="evidence" value="ECO:0007669"/>
    <property type="project" value="UniProtKB-SubCell"/>
</dbReference>
<dbReference type="GO" id="GO:0000938">
    <property type="term" value="C:GARP complex"/>
    <property type="evidence" value="ECO:0007669"/>
    <property type="project" value="InterPro"/>
</dbReference>
<dbReference type="GO" id="GO:0015031">
    <property type="term" value="P:protein transport"/>
    <property type="evidence" value="ECO:0007669"/>
    <property type="project" value="UniProtKB-KW"/>
</dbReference>
<dbReference type="GO" id="GO:0042147">
    <property type="term" value="P:retrograde transport, endosome to Golgi"/>
    <property type="evidence" value="ECO:0007669"/>
    <property type="project" value="InterPro"/>
</dbReference>
<dbReference type="InterPro" id="IPR039766">
    <property type="entry name" value="Vps53"/>
</dbReference>
<dbReference type="InterPro" id="IPR031745">
    <property type="entry name" value="Vps53_C"/>
</dbReference>
<dbReference type="InterPro" id="IPR007234">
    <property type="entry name" value="Vps53_N"/>
</dbReference>
<dbReference type="PANTHER" id="PTHR12820:SF0">
    <property type="entry name" value="VACUOLAR PROTEIN SORTING-ASSOCIATED PROTEIN 53 HOMOLOG"/>
    <property type="match status" value="1"/>
</dbReference>
<dbReference type="PANTHER" id="PTHR12820">
    <property type="entry name" value="VACUOLAR SORTING PROTEIN 53"/>
    <property type="match status" value="1"/>
</dbReference>
<dbReference type="Pfam" id="PF16854">
    <property type="entry name" value="VPS53_C"/>
    <property type="match status" value="1"/>
</dbReference>
<dbReference type="Pfam" id="PF04100">
    <property type="entry name" value="Vps53_N"/>
    <property type="match status" value="1"/>
</dbReference>
<proteinExistence type="evidence at transcript level"/>
<reference key="1">
    <citation type="journal article" date="2000" name="Nature">
        <title>Sequence and analysis of chromosome 1 of the plant Arabidopsis thaliana.</title>
        <authorList>
            <person name="Theologis A."/>
            <person name="Ecker J.R."/>
            <person name="Palm C.J."/>
            <person name="Federspiel N.A."/>
            <person name="Kaul S."/>
            <person name="White O."/>
            <person name="Alonso J."/>
            <person name="Altafi H."/>
            <person name="Araujo R."/>
            <person name="Bowman C.L."/>
            <person name="Brooks S.Y."/>
            <person name="Buehler E."/>
            <person name="Chan A."/>
            <person name="Chao Q."/>
            <person name="Chen H."/>
            <person name="Cheuk R.F."/>
            <person name="Chin C.W."/>
            <person name="Chung M.K."/>
            <person name="Conn L."/>
            <person name="Conway A.B."/>
            <person name="Conway A.R."/>
            <person name="Creasy T.H."/>
            <person name="Dewar K."/>
            <person name="Dunn P."/>
            <person name="Etgu P."/>
            <person name="Feldblyum T.V."/>
            <person name="Feng J.-D."/>
            <person name="Fong B."/>
            <person name="Fujii C.Y."/>
            <person name="Gill J.E."/>
            <person name="Goldsmith A.D."/>
            <person name="Haas B."/>
            <person name="Hansen N.F."/>
            <person name="Hughes B."/>
            <person name="Huizar L."/>
            <person name="Hunter J.L."/>
            <person name="Jenkins J."/>
            <person name="Johnson-Hopson C."/>
            <person name="Khan S."/>
            <person name="Khaykin E."/>
            <person name="Kim C.J."/>
            <person name="Koo H.L."/>
            <person name="Kremenetskaia I."/>
            <person name="Kurtz D.B."/>
            <person name="Kwan A."/>
            <person name="Lam B."/>
            <person name="Langin-Hooper S."/>
            <person name="Lee A."/>
            <person name="Lee J.M."/>
            <person name="Lenz C.A."/>
            <person name="Li J.H."/>
            <person name="Li Y.-P."/>
            <person name="Lin X."/>
            <person name="Liu S.X."/>
            <person name="Liu Z.A."/>
            <person name="Luros J.S."/>
            <person name="Maiti R."/>
            <person name="Marziali A."/>
            <person name="Militscher J."/>
            <person name="Miranda M."/>
            <person name="Nguyen M."/>
            <person name="Nierman W.C."/>
            <person name="Osborne B.I."/>
            <person name="Pai G."/>
            <person name="Peterson J."/>
            <person name="Pham P.K."/>
            <person name="Rizzo M."/>
            <person name="Rooney T."/>
            <person name="Rowley D."/>
            <person name="Sakano H."/>
            <person name="Salzberg S.L."/>
            <person name="Schwartz J.R."/>
            <person name="Shinn P."/>
            <person name="Southwick A.M."/>
            <person name="Sun H."/>
            <person name="Tallon L.J."/>
            <person name="Tambunga G."/>
            <person name="Toriumi M.J."/>
            <person name="Town C.D."/>
            <person name="Utterback T."/>
            <person name="Van Aken S."/>
            <person name="Vaysberg M."/>
            <person name="Vysotskaia V.S."/>
            <person name="Walker M."/>
            <person name="Wu D."/>
            <person name="Yu G."/>
            <person name="Fraser C.M."/>
            <person name="Venter J.C."/>
            <person name="Davis R.W."/>
        </authorList>
    </citation>
    <scope>NUCLEOTIDE SEQUENCE [LARGE SCALE GENOMIC DNA]</scope>
    <source>
        <strain>cv. Columbia</strain>
    </source>
</reference>
<reference key="2">
    <citation type="journal article" date="2017" name="Plant J.">
        <title>Araport11: a complete reannotation of the Arabidopsis thaliana reference genome.</title>
        <authorList>
            <person name="Cheng C.Y."/>
            <person name="Krishnakumar V."/>
            <person name="Chan A.P."/>
            <person name="Thibaud-Nissen F."/>
            <person name="Schobel S."/>
            <person name="Town C.D."/>
        </authorList>
    </citation>
    <scope>GENOME REANNOTATION</scope>
    <source>
        <strain>cv. Columbia</strain>
    </source>
</reference>
<reference key="3">
    <citation type="submission" date="2004-09" db="EMBL/GenBank/DDBJ databases">
        <title>Large-scale analysis of RIKEN Arabidopsis full-length (RAFL) cDNAs.</title>
        <authorList>
            <person name="Totoki Y."/>
            <person name="Seki M."/>
            <person name="Ishida J."/>
            <person name="Nakajima M."/>
            <person name="Enju A."/>
            <person name="Kamiya A."/>
            <person name="Narusaka M."/>
            <person name="Shin-i T."/>
            <person name="Nakagawa M."/>
            <person name="Sakamoto N."/>
            <person name="Oishi K."/>
            <person name="Kohara Y."/>
            <person name="Kobayashi M."/>
            <person name="Toyoda A."/>
            <person name="Sakaki Y."/>
            <person name="Sakurai T."/>
            <person name="Iida K."/>
            <person name="Akiyama K."/>
            <person name="Satou M."/>
            <person name="Toyoda T."/>
            <person name="Konagaya A."/>
            <person name="Carninci P."/>
            <person name="Kawai J."/>
            <person name="Hayashizaki Y."/>
            <person name="Shinozaki K."/>
        </authorList>
    </citation>
    <scope>NUCLEOTIDE SEQUENCE [LARGE SCALE MRNA] (ISOFORM 2)</scope>
    <source>
        <strain>cv. Columbia</strain>
    </source>
</reference>